<accession>Q6P4K7</accession>
<comment type="function">
    <text evidence="2">May play a pivotal role in the transcriptional cascade that specifies primary neurons in embryos. Stabilizes the higher neural potential of selected progenitor cells that express neurog2/X-ngnr-1 by maintaining Delta-Notch signaling. Thus ensures the transition between neural competence and irreversible commitment to a neural fate. Also promotes neuronal differentiation by activating neurod1 expression, directly or indirectly (By similarity).</text>
</comment>
<comment type="subcellular location">
    <subcellularLocation>
        <location evidence="4">Nucleus</location>
    </subcellularLocation>
</comment>
<comment type="similarity">
    <text evidence="4">Belongs to the COE family.</text>
</comment>
<gene>
    <name evidence="7" type="primary">ebf2</name>
    <name evidence="6" type="synonym">coe2</name>
</gene>
<protein>
    <recommendedName>
        <fullName evidence="6">Transcription factor coe2</fullName>
    </recommendedName>
    <alternativeName>
        <fullName evidence="3">Early B-cell factor 2</fullName>
        <shortName evidence="3">EBF-2</shortName>
    </alternativeName>
</protein>
<name>COE2_XENTR</name>
<feature type="chain" id="PRO_0000401105" description="Transcription factor coe2">
    <location>
        <begin position="1"/>
        <end position="575"/>
    </location>
</feature>
<feature type="domain" description="IPT/TIG" evidence="4">
    <location>
        <begin position="254"/>
        <end position="336"/>
    </location>
</feature>
<feature type="zinc finger region" description="C5-type" evidence="4">
    <location>
        <begin position="151"/>
        <end position="170"/>
    </location>
</feature>
<feature type="region of interest" description="Interaction with DNA" evidence="1">
    <location>
        <begin position="63"/>
        <end position="66"/>
    </location>
</feature>
<feature type="region of interest" description="Interaction with DNA" evidence="1">
    <location>
        <begin position="197"/>
        <end position="204"/>
    </location>
</feature>
<feature type="region of interest" description="Interaction with DNA" evidence="1">
    <location>
        <begin position="236"/>
        <end position="239"/>
    </location>
</feature>
<feature type="region of interest" description="Disordered" evidence="5">
    <location>
        <begin position="450"/>
        <end position="487"/>
    </location>
</feature>
<feature type="compositionally biased region" description="Low complexity" evidence="5">
    <location>
        <begin position="454"/>
        <end position="476"/>
    </location>
</feature>
<feature type="compositionally biased region" description="Polar residues" evidence="5">
    <location>
        <begin position="477"/>
        <end position="487"/>
    </location>
</feature>
<feature type="site" description="Interaction with DNA" evidence="1">
    <location>
        <position position="163"/>
    </location>
</feature>
<feature type="site" description="Interaction with DNA" evidence="1">
    <location>
        <position position="172"/>
    </location>
</feature>
<reference evidence="6" key="1">
    <citation type="submission" date="2003-12" db="EMBL/GenBank/DDBJ databases">
        <authorList>
            <consortium name="NIH - Xenopus Gene Collection (XGC) project"/>
        </authorList>
    </citation>
    <scope>NUCLEOTIDE SEQUENCE [LARGE SCALE MRNA]</scope>
    <source>
        <tissue evidence="6">Neurula</tissue>
    </source>
</reference>
<dbReference type="EMBL" id="BC063360">
    <property type="protein sequence ID" value="AAH63360.1"/>
    <property type="molecule type" value="mRNA"/>
</dbReference>
<dbReference type="RefSeq" id="NP_989200.1">
    <property type="nucleotide sequence ID" value="NM_203869.1"/>
</dbReference>
<dbReference type="SMR" id="Q6P4K7"/>
<dbReference type="FunCoup" id="Q6P4K7">
    <property type="interactions" value="304"/>
</dbReference>
<dbReference type="STRING" id="8364.ENSXETP00000039529"/>
<dbReference type="PaxDb" id="8364-ENSXETP00000022402"/>
<dbReference type="DNASU" id="394808"/>
<dbReference type="GeneID" id="394808"/>
<dbReference type="KEGG" id="xtr:394808"/>
<dbReference type="AGR" id="Xenbase:XB-GENE-971136"/>
<dbReference type="CTD" id="64641"/>
<dbReference type="Xenbase" id="XB-GENE-971136">
    <property type="gene designation" value="ebf2"/>
</dbReference>
<dbReference type="eggNOG" id="KOG3836">
    <property type="taxonomic scope" value="Eukaryota"/>
</dbReference>
<dbReference type="HOGENOM" id="CLU_016320_3_1_1"/>
<dbReference type="InParanoid" id="Q6P4K7"/>
<dbReference type="OrthoDB" id="25246at2759"/>
<dbReference type="Proteomes" id="UP000008143">
    <property type="component" value="Chromosome 3"/>
</dbReference>
<dbReference type="GO" id="GO:0005634">
    <property type="term" value="C:nucleus"/>
    <property type="evidence" value="ECO:0007669"/>
    <property type="project" value="UniProtKB-SubCell"/>
</dbReference>
<dbReference type="GO" id="GO:0003677">
    <property type="term" value="F:DNA binding"/>
    <property type="evidence" value="ECO:0007669"/>
    <property type="project" value="UniProtKB-KW"/>
</dbReference>
<dbReference type="GO" id="GO:0003700">
    <property type="term" value="F:DNA-binding transcription factor activity"/>
    <property type="evidence" value="ECO:0007669"/>
    <property type="project" value="InterPro"/>
</dbReference>
<dbReference type="GO" id="GO:0008270">
    <property type="term" value="F:zinc ion binding"/>
    <property type="evidence" value="ECO:0007669"/>
    <property type="project" value="UniProtKB-KW"/>
</dbReference>
<dbReference type="GO" id="GO:0030154">
    <property type="term" value="P:cell differentiation"/>
    <property type="evidence" value="ECO:0007669"/>
    <property type="project" value="UniProtKB-KW"/>
</dbReference>
<dbReference type="GO" id="GO:0007399">
    <property type="term" value="P:nervous system development"/>
    <property type="evidence" value="ECO:0007669"/>
    <property type="project" value="UniProtKB-KW"/>
</dbReference>
<dbReference type="CDD" id="cd11606">
    <property type="entry name" value="COE_DBD"/>
    <property type="match status" value="1"/>
</dbReference>
<dbReference type="CDD" id="cd01175">
    <property type="entry name" value="IPT_COE"/>
    <property type="match status" value="1"/>
</dbReference>
<dbReference type="FunFam" id="1.10.287.4280:FF:000001">
    <property type="entry name" value="transcription factor COE1 isoform X2"/>
    <property type="match status" value="1"/>
</dbReference>
<dbReference type="FunFam" id="2.60.40.3180:FF:000002">
    <property type="entry name" value="transcription factor COE2 isoform X1"/>
    <property type="match status" value="1"/>
</dbReference>
<dbReference type="FunFam" id="2.60.40.10:FF:001696">
    <property type="entry name" value="Transcription factor COE3"/>
    <property type="match status" value="1"/>
</dbReference>
<dbReference type="Gene3D" id="1.10.287.4280">
    <property type="match status" value="1"/>
</dbReference>
<dbReference type="Gene3D" id="2.60.40.10">
    <property type="entry name" value="Immunoglobulins"/>
    <property type="match status" value="1"/>
</dbReference>
<dbReference type="Gene3D" id="2.60.40.3180">
    <property type="entry name" value="Transcription factor COE1, DNA-binding domain"/>
    <property type="match status" value="1"/>
</dbReference>
<dbReference type="InterPro" id="IPR032200">
    <property type="entry name" value="COE_DBD"/>
</dbReference>
<dbReference type="InterPro" id="IPR038173">
    <property type="entry name" value="COE_DBD_sf"/>
</dbReference>
<dbReference type="InterPro" id="IPR032201">
    <property type="entry name" value="COE_HLH"/>
</dbReference>
<dbReference type="InterPro" id="IPR038006">
    <property type="entry name" value="COE_IPT"/>
</dbReference>
<dbReference type="InterPro" id="IPR013783">
    <property type="entry name" value="Ig-like_fold"/>
</dbReference>
<dbReference type="InterPro" id="IPR014756">
    <property type="entry name" value="Ig_E-set"/>
</dbReference>
<dbReference type="InterPro" id="IPR002909">
    <property type="entry name" value="IPT_dom"/>
</dbReference>
<dbReference type="InterPro" id="IPR003523">
    <property type="entry name" value="Transcription_factor_COE"/>
</dbReference>
<dbReference type="InterPro" id="IPR018350">
    <property type="entry name" value="Transcription_factor_COE_CS"/>
</dbReference>
<dbReference type="PANTHER" id="PTHR10747">
    <property type="entry name" value="TRANSCRIPTION FACTOR COE FAMILY MEMBER"/>
    <property type="match status" value="1"/>
</dbReference>
<dbReference type="Pfam" id="PF16422">
    <property type="entry name" value="COE1_DBD"/>
    <property type="match status" value="1"/>
</dbReference>
<dbReference type="Pfam" id="PF16423">
    <property type="entry name" value="COE1_HLH"/>
    <property type="match status" value="1"/>
</dbReference>
<dbReference type="Pfam" id="PF01833">
    <property type="entry name" value="TIG"/>
    <property type="match status" value="1"/>
</dbReference>
<dbReference type="SMART" id="SM00429">
    <property type="entry name" value="IPT"/>
    <property type="match status" value="1"/>
</dbReference>
<dbReference type="SUPFAM" id="SSF81296">
    <property type="entry name" value="E set domains"/>
    <property type="match status" value="1"/>
</dbReference>
<dbReference type="PROSITE" id="PS01345">
    <property type="entry name" value="COE"/>
    <property type="match status" value="1"/>
</dbReference>
<evidence type="ECO:0000250" key="1"/>
<evidence type="ECO:0000250" key="2">
    <source>
        <dbReference type="UniProtKB" id="B7ZRI2"/>
    </source>
</evidence>
<evidence type="ECO:0000250" key="3">
    <source>
        <dbReference type="UniProtKB" id="B7ZRJ4"/>
    </source>
</evidence>
<evidence type="ECO:0000255" key="4"/>
<evidence type="ECO:0000256" key="5">
    <source>
        <dbReference type="SAM" id="MobiDB-lite"/>
    </source>
</evidence>
<evidence type="ECO:0000312" key="6">
    <source>
        <dbReference type="EMBL" id="AAH63360.1"/>
    </source>
</evidence>
<evidence type="ECO:0000312" key="7">
    <source>
        <dbReference type="Xenbase" id="XB-GENE-971136"/>
    </source>
</evidence>
<keyword id="KW-0010">Activator</keyword>
<keyword id="KW-0217">Developmental protein</keyword>
<keyword id="KW-0221">Differentiation</keyword>
<keyword id="KW-0238">DNA-binding</keyword>
<keyword id="KW-0479">Metal-binding</keyword>
<keyword id="KW-0524">Neurogenesis</keyword>
<keyword id="KW-0539">Nucleus</keyword>
<keyword id="KW-1185">Reference proteome</keyword>
<keyword id="KW-0804">Transcription</keyword>
<keyword id="KW-0805">Transcription regulation</keyword>
<keyword id="KW-0862">Zinc</keyword>
<keyword id="KW-0863">Zinc-finger</keyword>
<sequence length="575" mass="62805">MFGVQDTLARSGTALRDKALGVGMDPVRSWVRNVGVVDAKVAAQSGVAVSRAHFEKQPPSNLRKSNFFHFVLALYDRQGQPIEIERTAFVDFVENEKELSTEKTNNGTHYKLQLLYSNGVRTEQDLYVRLIDSVTKQPIAYEGQNKNPEMCRVLLTHEVMCSRCCEKKSCGNRNETPSDPVIIDRFFLKFFLKCNQNCLKTAGNPRDMRRFQVVLSTTVNVDGHVLAVSDNMFVHNNSKHGRRARRLDPSEATPCIKAISPSEGWTTGGAMVIIIGDNFFDGLQVVFGTMLVWSELITPHAIRVQTPPRHIPGVVEVTLSYKSKQFCKGAPGRFIYTALNEPTIDYGFQRLQKVIPRHPGDPERLAKEMLLKRAADLVEALYGTPHNNQDIILKRAADIAEALYSVPRNHNQIPALSSSPVHSGMMGINSYGGQLGVSISESQANNQGYIRNTSSISPRGYSSSSTPQQSNYSTPSNSMNGYSNVPMSNLGVPGSPGFINGSPTTSPYGIMPSSPPVGSSGSSSILPFSSSVFPSIKQKSAFAPVIRPQGSPSPACSSSNSNGFRAMTGLVVPPM</sequence>
<organism>
    <name type="scientific">Xenopus tropicalis</name>
    <name type="common">Western clawed frog</name>
    <name type="synonym">Silurana tropicalis</name>
    <dbReference type="NCBI Taxonomy" id="8364"/>
    <lineage>
        <taxon>Eukaryota</taxon>
        <taxon>Metazoa</taxon>
        <taxon>Chordata</taxon>
        <taxon>Craniata</taxon>
        <taxon>Vertebrata</taxon>
        <taxon>Euteleostomi</taxon>
        <taxon>Amphibia</taxon>
        <taxon>Batrachia</taxon>
        <taxon>Anura</taxon>
        <taxon>Pipoidea</taxon>
        <taxon>Pipidae</taxon>
        <taxon>Xenopodinae</taxon>
        <taxon>Xenopus</taxon>
        <taxon>Silurana</taxon>
    </lineage>
</organism>
<proteinExistence type="evidence at transcript level"/>